<reference key="1">
    <citation type="journal article" date="2001" name="Science">
        <title>Comparative genomics of Listeria species.</title>
        <authorList>
            <person name="Glaser P."/>
            <person name="Frangeul L."/>
            <person name="Buchrieser C."/>
            <person name="Rusniok C."/>
            <person name="Amend A."/>
            <person name="Baquero F."/>
            <person name="Berche P."/>
            <person name="Bloecker H."/>
            <person name="Brandt P."/>
            <person name="Chakraborty T."/>
            <person name="Charbit A."/>
            <person name="Chetouani F."/>
            <person name="Couve E."/>
            <person name="de Daruvar A."/>
            <person name="Dehoux P."/>
            <person name="Domann E."/>
            <person name="Dominguez-Bernal G."/>
            <person name="Duchaud E."/>
            <person name="Durant L."/>
            <person name="Dussurget O."/>
            <person name="Entian K.-D."/>
            <person name="Fsihi H."/>
            <person name="Garcia-del Portillo F."/>
            <person name="Garrido P."/>
            <person name="Gautier L."/>
            <person name="Goebel W."/>
            <person name="Gomez-Lopez N."/>
            <person name="Hain T."/>
            <person name="Hauf J."/>
            <person name="Jackson D."/>
            <person name="Jones L.-M."/>
            <person name="Kaerst U."/>
            <person name="Kreft J."/>
            <person name="Kuhn M."/>
            <person name="Kunst F."/>
            <person name="Kurapkat G."/>
            <person name="Madueno E."/>
            <person name="Maitournam A."/>
            <person name="Mata Vicente J."/>
            <person name="Ng E."/>
            <person name="Nedjari H."/>
            <person name="Nordsiek G."/>
            <person name="Novella S."/>
            <person name="de Pablos B."/>
            <person name="Perez-Diaz J.-C."/>
            <person name="Purcell R."/>
            <person name="Remmel B."/>
            <person name="Rose M."/>
            <person name="Schlueter T."/>
            <person name="Simoes N."/>
            <person name="Tierrez A."/>
            <person name="Vazquez-Boland J.-A."/>
            <person name="Voss H."/>
            <person name="Wehland J."/>
            <person name="Cossart P."/>
        </authorList>
    </citation>
    <scope>NUCLEOTIDE SEQUENCE [LARGE SCALE GENOMIC DNA]</scope>
    <source>
        <strain>ATCC BAA-679 / EGD-e</strain>
    </source>
</reference>
<dbReference type="EMBL" id="AL591978">
    <property type="protein sequence ID" value="CAC99312.1"/>
    <property type="molecule type" value="Genomic_DNA"/>
</dbReference>
<dbReference type="PIR" id="AB1229">
    <property type="entry name" value="AB1229"/>
</dbReference>
<dbReference type="RefSeq" id="NP_464759.1">
    <property type="nucleotide sequence ID" value="NC_003210.1"/>
</dbReference>
<dbReference type="RefSeq" id="WP_003732777.1">
    <property type="nucleotide sequence ID" value="NZ_CP149495.1"/>
</dbReference>
<dbReference type="SMR" id="Q8Y7P0"/>
<dbReference type="STRING" id="169963.gene:17593890"/>
<dbReference type="PaxDb" id="169963-lmo1234"/>
<dbReference type="EnsemblBacteria" id="CAC99312">
    <property type="protein sequence ID" value="CAC99312"/>
    <property type="gene ID" value="CAC99312"/>
</dbReference>
<dbReference type="GeneID" id="986033"/>
<dbReference type="KEGG" id="lmo:lmo1234"/>
<dbReference type="PATRIC" id="fig|169963.11.peg.1265"/>
<dbReference type="eggNOG" id="COG0322">
    <property type="taxonomic scope" value="Bacteria"/>
</dbReference>
<dbReference type="HOGENOM" id="CLU_014841_3_2_9"/>
<dbReference type="OrthoDB" id="9804933at2"/>
<dbReference type="PhylomeDB" id="Q8Y7P0"/>
<dbReference type="BioCyc" id="LMON169963:LMO1234-MONOMER"/>
<dbReference type="Proteomes" id="UP000000817">
    <property type="component" value="Chromosome"/>
</dbReference>
<dbReference type="GO" id="GO:0005737">
    <property type="term" value="C:cytoplasm"/>
    <property type="evidence" value="ECO:0007669"/>
    <property type="project" value="UniProtKB-SubCell"/>
</dbReference>
<dbReference type="GO" id="GO:0009380">
    <property type="term" value="C:excinuclease repair complex"/>
    <property type="evidence" value="ECO:0000318"/>
    <property type="project" value="GO_Central"/>
</dbReference>
<dbReference type="GO" id="GO:0003677">
    <property type="term" value="F:DNA binding"/>
    <property type="evidence" value="ECO:0007669"/>
    <property type="project" value="UniProtKB-UniRule"/>
</dbReference>
<dbReference type="GO" id="GO:0009381">
    <property type="term" value="F:excinuclease ABC activity"/>
    <property type="evidence" value="ECO:0007669"/>
    <property type="project" value="UniProtKB-UniRule"/>
</dbReference>
<dbReference type="GO" id="GO:0006974">
    <property type="term" value="P:DNA damage response"/>
    <property type="evidence" value="ECO:0000318"/>
    <property type="project" value="GO_Central"/>
</dbReference>
<dbReference type="GO" id="GO:0006289">
    <property type="term" value="P:nucleotide-excision repair"/>
    <property type="evidence" value="ECO:0007669"/>
    <property type="project" value="UniProtKB-UniRule"/>
</dbReference>
<dbReference type="GO" id="GO:0009432">
    <property type="term" value="P:SOS response"/>
    <property type="evidence" value="ECO:0007669"/>
    <property type="project" value="UniProtKB-UniRule"/>
</dbReference>
<dbReference type="CDD" id="cd10434">
    <property type="entry name" value="GIY-YIG_UvrC_Cho"/>
    <property type="match status" value="1"/>
</dbReference>
<dbReference type="FunFam" id="1.10.150.20:FF:000005">
    <property type="entry name" value="UvrABC system protein C"/>
    <property type="match status" value="1"/>
</dbReference>
<dbReference type="FunFam" id="3.30.420.340:FF:000002">
    <property type="entry name" value="UvrABC system protein C"/>
    <property type="match status" value="1"/>
</dbReference>
<dbReference type="FunFam" id="3.40.1440.10:FF:000001">
    <property type="entry name" value="UvrABC system protein C"/>
    <property type="match status" value="1"/>
</dbReference>
<dbReference type="FunFam" id="4.10.860.10:FF:000002">
    <property type="entry name" value="UvrABC system protein C"/>
    <property type="match status" value="1"/>
</dbReference>
<dbReference type="Gene3D" id="1.10.150.20">
    <property type="entry name" value="5' to 3' exonuclease, C-terminal subdomain"/>
    <property type="match status" value="1"/>
</dbReference>
<dbReference type="Gene3D" id="3.40.1440.10">
    <property type="entry name" value="GIY-YIG endonuclease"/>
    <property type="match status" value="1"/>
</dbReference>
<dbReference type="Gene3D" id="4.10.860.10">
    <property type="entry name" value="UVR domain"/>
    <property type="match status" value="1"/>
</dbReference>
<dbReference type="Gene3D" id="3.30.420.340">
    <property type="entry name" value="UvrC, RNAse H endonuclease domain"/>
    <property type="match status" value="1"/>
</dbReference>
<dbReference type="HAMAP" id="MF_00203">
    <property type="entry name" value="UvrC"/>
    <property type="match status" value="1"/>
</dbReference>
<dbReference type="InterPro" id="IPR041663">
    <property type="entry name" value="DisA/LigA_HHH"/>
</dbReference>
<dbReference type="InterPro" id="IPR000305">
    <property type="entry name" value="GIY-YIG_endonuc"/>
</dbReference>
<dbReference type="InterPro" id="IPR035901">
    <property type="entry name" value="GIY-YIG_endonuc_sf"/>
</dbReference>
<dbReference type="InterPro" id="IPR047296">
    <property type="entry name" value="GIY-YIG_UvrC_Cho"/>
</dbReference>
<dbReference type="InterPro" id="IPR010994">
    <property type="entry name" value="RuvA_2-like"/>
</dbReference>
<dbReference type="InterPro" id="IPR001943">
    <property type="entry name" value="UVR_dom"/>
</dbReference>
<dbReference type="InterPro" id="IPR036876">
    <property type="entry name" value="UVR_dom_sf"/>
</dbReference>
<dbReference type="InterPro" id="IPR050066">
    <property type="entry name" value="UvrABC_protein_C"/>
</dbReference>
<dbReference type="InterPro" id="IPR004791">
    <property type="entry name" value="UvrC"/>
</dbReference>
<dbReference type="InterPro" id="IPR001162">
    <property type="entry name" value="UvrC_RNase_H_dom"/>
</dbReference>
<dbReference type="InterPro" id="IPR038476">
    <property type="entry name" value="UvrC_RNase_H_dom_sf"/>
</dbReference>
<dbReference type="NCBIfam" id="TIGR00194">
    <property type="entry name" value="uvrC"/>
    <property type="match status" value="1"/>
</dbReference>
<dbReference type="PANTHER" id="PTHR30562:SF1">
    <property type="entry name" value="UVRABC SYSTEM PROTEIN C"/>
    <property type="match status" value="1"/>
</dbReference>
<dbReference type="PANTHER" id="PTHR30562">
    <property type="entry name" value="UVRC/OXIDOREDUCTASE"/>
    <property type="match status" value="1"/>
</dbReference>
<dbReference type="Pfam" id="PF01541">
    <property type="entry name" value="GIY-YIG"/>
    <property type="match status" value="1"/>
</dbReference>
<dbReference type="Pfam" id="PF12826">
    <property type="entry name" value="HHH_2"/>
    <property type="match status" value="1"/>
</dbReference>
<dbReference type="Pfam" id="PF02151">
    <property type="entry name" value="UVR"/>
    <property type="match status" value="1"/>
</dbReference>
<dbReference type="Pfam" id="PF22920">
    <property type="entry name" value="UvrC_RNaseH"/>
    <property type="match status" value="1"/>
</dbReference>
<dbReference type="Pfam" id="PF08459">
    <property type="entry name" value="UvrC_RNaseH_dom"/>
    <property type="match status" value="1"/>
</dbReference>
<dbReference type="SMART" id="SM00465">
    <property type="entry name" value="GIYc"/>
    <property type="match status" value="1"/>
</dbReference>
<dbReference type="SUPFAM" id="SSF46600">
    <property type="entry name" value="C-terminal UvrC-binding domain of UvrB"/>
    <property type="match status" value="1"/>
</dbReference>
<dbReference type="SUPFAM" id="SSF82771">
    <property type="entry name" value="GIY-YIG endonuclease"/>
    <property type="match status" value="1"/>
</dbReference>
<dbReference type="SUPFAM" id="SSF47781">
    <property type="entry name" value="RuvA domain 2-like"/>
    <property type="match status" value="1"/>
</dbReference>
<dbReference type="PROSITE" id="PS50164">
    <property type="entry name" value="GIY_YIG"/>
    <property type="match status" value="1"/>
</dbReference>
<dbReference type="PROSITE" id="PS50151">
    <property type="entry name" value="UVR"/>
    <property type="match status" value="1"/>
</dbReference>
<dbReference type="PROSITE" id="PS50165">
    <property type="entry name" value="UVRC"/>
    <property type="match status" value="1"/>
</dbReference>
<feature type="chain" id="PRO_0000138314" description="UvrABC system protein C">
    <location>
        <begin position="1"/>
        <end position="603"/>
    </location>
</feature>
<feature type="domain" description="GIY-YIG" evidence="1">
    <location>
        <begin position="15"/>
        <end position="92"/>
    </location>
</feature>
<feature type="domain" description="UVR" evidence="1">
    <location>
        <begin position="197"/>
        <end position="232"/>
    </location>
</feature>
<organism>
    <name type="scientific">Listeria monocytogenes serovar 1/2a (strain ATCC BAA-679 / EGD-e)</name>
    <dbReference type="NCBI Taxonomy" id="169963"/>
    <lineage>
        <taxon>Bacteria</taxon>
        <taxon>Bacillati</taxon>
        <taxon>Bacillota</taxon>
        <taxon>Bacilli</taxon>
        <taxon>Bacillales</taxon>
        <taxon>Listeriaceae</taxon>
        <taxon>Listeria</taxon>
    </lineage>
</organism>
<sequence length="603" mass="69315">MSSEHIQNKLALLPDQPGCYLMKDRQGTIIYVGKAKILKNRVRSYFSGTHDSKTQRLVQEIVDFEYIVTSSNVEALLLEINLIKKHDPRFNIRLKDDKTYPFIKITNERHPRLIITRQVKKDKGKYFGPYPNVYAANEVKRILDRLYPLRKCSTLPNKVCLYYHLGQCLAPCVFDVEASKYKEMQDEIVAFLNGGYKTVKNDLMKKMQEAAENMEFEKAGEFRDQINAIETTMEKQKMTMNDFVDRDVFGYAIDKGWMCVQVFFIRQGKLIERDVSQFPFYNDADEDFLTFIGQFYQKANHIPPQEIYLPNDVDSEAVQAVVPDTKIIVPQRGNKKDLVKLAYKNAKIALNEKFMLLERNEERTVGAVERLGEAMGIPTPSRVEAFDNSNIHGTDPVSAMVTFLDGKPSKNDYRKYKIKTVEGPDDYATMREVIRRRYWRVLKEGLPMPDLILIDGGKGQIDSAKDVLTNELGLDIPVAGLAKDDKHRTSQLLFGDPLEIVPLERNSQEFYLLQRMQDEVHRFAITFHRQLRSKTGFQSILDGIPGVGPGRKKKLLKHFGSMKKLKEASIEEIKEAGVPLNVAEEVHKHITAFNEKAKNTEQK</sequence>
<accession>Q8Y7P0</accession>
<name>UVRC_LISMO</name>
<keyword id="KW-0963">Cytoplasm</keyword>
<keyword id="KW-0227">DNA damage</keyword>
<keyword id="KW-0228">DNA excision</keyword>
<keyword id="KW-0234">DNA repair</keyword>
<keyword id="KW-0267">Excision nuclease</keyword>
<keyword id="KW-1185">Reference proteome</keyword>
<keyword id="KW-0742">SOS response</keyword>
<protein>
    <recommendedName>
        <fullName evidence="1">UvrABC system protein C</fullName>
        <shortName evidence="1">Protein UvrC</shortName>
    </recommendedName>
    <alternativeName>
        <fullName evidence="1">Excinuclease ABC subunit C</fullName>
    </alternativeName>
</protein>
<gene>
    <name evidence="1" type="primary">uvrC</name>
    <name type="ordered locus">lmo1234</name>
</gene>
<evidence type="ECO:0000255" key="1">
    <source>
        <dbReference type="HAMAP-Rule" id="MF_00203"/>
    </source>
</evidence>
<comment type="function">
    <text evidence="1">The UvrABC repair system catalyzes the recognition and processing of DNA lesions. UvrC both incises the 5' and 3' sides of the lesion. The N-terminal half is responsible for the 3' incision and the C-terminal half is responsible for the 5' incision.</text>
</comment>
<comment type="subunit">
    <text evidence="1">Interacts with UvrB in an incision complex.</text>
</comment>
<comment type="subcellular location">
    <subcellularLocation>
        <location evidence="1">Cytoplasm</location>
    </subcellularLocation>
</comment>
<comment type="similarity">
    <text evidence="1">Belongs to the UvrC family.</text>
</comment>
<proteinExistence type="inferred from homology"/>